<dbReference type="EC" id="5.4.99.12" evidence="1"/>
<dbReference type="EMBL" id="AM406671">
    <property type="protein sequence ID" value="CAL97066.1"/>
    <property type="molecule type" value="Genomic_DNA"/>
</dbReference>
<dbReference type="RefSeq" id="WP_011834503.1">
    <property type="nucleotide sequence ID" value="NC_009004.1"/>
</dbReference>
<dbReference type="SMR" id="A2RIH1"/>
<dbReference type="STRING" id="416870.llmg_0462"/>
<dbReference type="KEGG" id="llm:llmg_0462"/>
<dbReference type="eggNOG" id="COG0101">
    <property type="taxonomic scope" value="Bacteria"/>
</dbReference>
<dbReference type="HOGENOM" id="CLU_014673_0_1_9"/>
<dbReference type="OrthoDB" id="9811823at2"/>
<dbReference type="PhylomeDB" id="A2RIH1"/>
<dbReference type="Proteomes" id="UP000000364">
    <property type="component" value="Chromosome"/>
</dbReference>
<dbReference type="GO" id="GO:0003723">
    <property type="term" value="F:RNA binding"/>
    <property type="evidence" value="ECO:0007669"/>
    <property type="project" value="InterPro"/>
</dbReference>
<dbReference type="GO" id="GO:0160147">
    <property type="term" value="F:tRNA pseudouridine(38-40) synthase activity"/>
    <property type="evidence" value="ECO:0007669"/>
    <property type="project" value="UniProtKB-EC"/>
</dbReference>
<dbReference type="GO" id="GO:0031119">
    <property type="term" value="P:tRNA pseudouridine synthesis"/>
    <property type="evidence" value="ECO:0007669"/>
    <property type="project" value="UniProtKB-UniRule"/>
</dbReference>
<dbReference type="CDD" id="cd02570">
    <property type="entry name" value="PseudoU_synth_EcTruA"/>
    <property type="match status" value="1"/>
</dbReference>
<dbReference type="FunFam" id="3.30.70.580:FF:000001">
    <property type="entry name" value="tRNA pseudouridine synthase A"/>
    <property type="match status" value="1"/>
</dbReference>
<dbReference type="Gene3D" id="3.30.70.660">
    <property type="entry name" value="Pseudouridine synthase I, catalytic domain, C-terminal subdomain"/>
    <property type="match status" value="1"/>
</dbReference>
<dbReference type="Gene3D" id="3.30.70.580">
    <property type="entry name" value="Pseudouridine synthase I, catalytic domain, N-terminal subdomain"/>
    <property type="match status" value="1"/>
</dbReference>
<dbReference type="HAMAP" id="MF_00171">
    <property type="entry name" value="TruA"/>
    <property type="match status" value="1"/>
</dbReference>
<dbReference type="InterPro" id="IPR020103">
    <property type="entry name" value="PsdUridine_synth_cat_dom_sf"/>
</dbReference>
<dbReference type="InterPro" id="IPR001406">
    <property type="entry name" value="PsdUridine_synth_TruA"/>
</dbReference>
<dbReference type="InterPro" id="IPR020097">
    <property type="entry name" value="PsdUridine_synth_TruA_a/b_dom"/>
</dbReference>
<dbReference type="InterPro" id="IPR020095">
    <property type="entry name" value="PsdUridine_synth_TruA_C"/>
</dbReference>
<dbReference type="InterPro" id="IPR020094">
    <property type="entry name" value="TruA/RsuA/RluB/E/F_N"/>
</dbReference>
<dbReference type="NCBIfam" id="TIGR00071">
    <property type="entry name" value="hisT_truA"/>
    <property type="match status" value="1"/>
</dbReference>
<dbReference type="PANTHER" id="PTHR11142">
    <property type="entry name" value="PSEUDOURIDYLATE SYNTHASE"/>
    <property type="match status" value="1"/>
</dbReference>
<dbReference type="PANTHER" id="PTHR11142:SF0">
    <property type="entry name" value="TRNA PSEUDOURIDINE SYNTHASE-LIKE 1"/>
    <property type="match status" value="1"/>
</dbReference>
<dbReference type="Pfam" id="PF01416">
    <property type="entry name" value="PseudoU_synth_1"/>
    <property type="match status" value="2"/>
</dbReference>
<dbReference type="PIRSF" id="PIRSF001430">
    <property type="entry name" value="tRNA_psdUrid_synth"/>
    <property type="match status" value="1"/>
</dbReference>
<dbReference type="SUPFAM" id="SSF55120">
    <property type="entry name" value="Pseudouridine synthase"/>
    <property type="match status" value="1"/>
</dbReference>
<feature type="chain" id="PRO_1000017100" description="tRNA pseudouridine synthase A">
    <location>
        <begin position="1"/>
        <end position="253"/>
    </location>
</feature>
<feature type="active site" description="Nucleophile" evidence="1">
    <location>
        <position position="53"/>
    </location>
</feature>
<feature type="binding site" evidence="1">
    <location>
        <position position="112"/>
    </location>
    <ligand>
        <name>substrate</name>
    </ligand>
</feature>
<gene>
    <name evidence="1" type="primary">truA</name>
    <name type="ordered locus">llmg_0462</name>
</gene>
<accession>A2RIH1</accession>
<protein>
    <recommendedName>
        <fullName evidence="1">tRNA pseudouridine synthase A</fullName>
        <ecNumber evidence="1">5.4.99.12</ecNumber>
    </recommendedName>
    <alternativeName>
        <fullName evidence="1">tRNA pseudouridine(38-40) synthase</fullName>
    </alternativeName>
    <alternativeName>
        <fullName evidence="1">tRNA pseudouridylate synthase I</fullName>
    </alternativeName>
    <alternativeName>
        <fullName evidence="1">tRNA-uridine isomerase I</fullName>
    </alternativeName>
</protein>
<comment type="function">
    <text evidence="1">Formation of pseudouridine at positions 38, 39 and 40 in the anticodon stem and loop of transfer RNAs.</text>
</comment>
<comment type="catalytic activity">
    <reaction evidence="1">
        <text>uridine(38/39/40) in tRNA = pseudouridine(38/39/40) in tRNA</text>
        <dbReference type="Rhea" id="RHEA:22376"/>
        <dbReference type="Rhea" id="RHEA-COMP:10085"/>
        <dbReference type="Rhea" id="RHEA-COMP:10087"/>
        <dbReference type="ChEBI" id="CHEBI:65314"/>
        <dbReference type="ChEBI" id="CHEBI:65315"/>
        <dbReference type="EC" id="5.4.99.12"/>
    </reaction>
</comment>
<comment type="subunit">
    <text evidence="1">Homodimer.</text>
</comment>
<comment type="similarity">
    <text evidence="1">Belongs to the tRNA pseudouridine synthase TruA family.</text>
</comment>
<proteinExistence type="inferred from homology"/>
<name>TRUA_LACLM</name>
<keyword id="KW-0413">Isomerase</keyword>
<keyword id="KW-0819">tRNA processing</keyword>
<organism>
    <name type="scientific">Lactococcus lactis subsp. cremoris (strain MG1363)</name>
    <dbReference type="NCBI Taxonomy" id="416870"/>
    <lineage>
        <taxon>Bacteria</taxon>
        <taxon>Bacillati</taxon>
        <taxon>Bacillota</taxon>
        <taxon>Bacilli</taxon>
        <taxon>Lactobacillales</taxon>
        <taxon>Streptococcaceae</taxon>
        <taxon>Lactococcus</taxon>
        <taxon>Lactococcus cremoris subsp. cremoris</taxon>
    </lineage>
</organism>
<sequence length="253" mass="29032">MTRYKATIAYDGTDFAGFQSQTNQRTVQEEIEKVLSKLNSFEPVILQGSGRTDSGVHAFGQVIHFDLNGKARDLERLRFGLDTQTPADIAVKKVELVPDDWHARYQKHEKTYEYYLENSVTRSPFHRHSKAYFRYPLNFERMQGAMVKLVGQHDFTGFTASGSSVDDKVRTIYQAEIIQLDKENFKFIFRGNGFLYKQVRNMVGTVIKIGNDRMPVSQIDKILTSKNRNFAGPTAAPEGLYLKEVKYEPINEI</sequence>
<reference key="1">
    <citation type="journal article" date="2007" name="J. Bacteriol.">
        <title>The complete genome sequence of the lactic acid bacterial paradigm Lactococcus lactis subsp. cremoris MG1363.</title>
        <authorList>
            <person name="Wegmann U."/>
            <person name="O'Connell-Motherway M."/>
            <person name="Zomer A."/>
            <person name="Buist G."/>
            <person name="Shearman C."/>
            <person name="Canchaya C."/>
            <person name="Ventura M."/>
            <person name="Goesmann A."/>
            <person name="Gasson M.J."/>
            <person name="Kuipers O.P."/>
            <person name="van Sinderen D."/>
            <person name="Kok J."/>
        </authorList>
    </citation>
    <scope>NUCLEOTIDE SEQUENCE [LARGE SCALE GENOMIC DNA]</scope>
    <source>
        <strain>MG1363</strain>
    </source>
</reference>
<evidence type="ECO:0000255" key="1">
    <source>
        <dbReference type="HAMAP-Rule" id="MF_00171"/>
    </source>
</evidence>